<sequence length="152" mass="16909">MNPQRRRRLWLVLALVLAGGLATTLVAMALQRNVAYLYTPAEVLRGEAGEHARFRLGGMVEKGSFRREAGSLEAHFRVTDGDAQLPVRYDRILPDLFREGQAVVATGRMQQGVFVAEDVLAKHDETYMPKEVADKMGSAHRKHQVAPAKVTQ</sequence>
<evidence type="ECO:0000255" key="1">
    <source>
        <dbReference type="HAMAP-Rule" id="MF_01959"/>
    </source>
</evidence>
<organism>
    <name type="scientific">Xanthomonas campestris pv. campestris (strain 8004)</name>
    <dbReference type="NCBI Taxonomy" id="314565"/>
    <lineage>
        <taxon>Bacteria</taxon>
        <taxon>Pseudomonadati</taxon>
        <taxon>Pseudomonadota</taxon>
        <taxon>Gammaproteobacteria</taxon>
        <taxon>Lysobacterales</taxon>
        <taxon>Lysobacteraceae</taxon>
        <taxon>Xanthomonas</taxon>
    </lineage>
</organism>
<protein>
    <recommendedName>
        <fullName evidence="1">Cytochrome c-type biogenesis protein CcmE 2</fullName>
    </recommendedName>
    <alternativeName>
        <fullName evidence="1">Cytochrome c maturation protein E 2</fullName>
    </alternativeName>
    <alternativeName>
        <fullName evidence="1">Heme chaperone CcmE 2</fullName>
    </alternativeName>
</protein>
<name>CCME2_XANC8</name>
<reference key="1">
    <citation type="journal article" date="2005" name="Genome Res.">
        <title>Comparative and functional genomic analyses of the pathogenicity of phytopathogen Xanthomonas campestris pv. campestris.</title>
        <authorList>
            <person name="Qian W."/>
            <person name="Jia Y."/>
            <person name="Ren S.-X."/>
            <person name="He Y.-Q."/>
            <person name="Feng J.-X."/>
            <person name="Lu L.-F."/>
            <person name="Sun Q."/>
            <person name="Ying G."/>
            <person name="Tang D.-J."/>
            <person name="Tang H."/>
            <person name="Wu W."/>
            <person name="Hao P."/>
            <person name="Wang L."/>
            <person name="Jiang B.-L."/>
            <person name="Zeng S."/>
            <person name="Gu W.-Y."/>
            <person name="Lu G."/>
            <person name="Rong L."/>
            <person name="Tian Y."/>
            <person name="Yao Z."/>
            <person name="Fu G."/>
            <person name="Chen B."/>
            <person name="Fang R."/>
            <person name="Qiang B."/>
            <person name="Chen Z."/>
            <person name="Zhao G.-P."/>
            <person name="Tang J.-L."/>
            <person name="He C."/>
        </authorList>
    </citation>
    <scope>NUCLEOTIDE SEQUENCE [LARGE SCALE GENOMIC DNA]</scope>
    <source>
        <strain>8004</strain>
    </source>
</reference>
<dbReference type="EMBL" id="CP000050">
    <property type="protein sequence ID" value="AAY48957.1"/>
    <property type="molecule type" value="Genomic_DNA"/>
</dbReference>
<dbReference type="SMR" id="Q4UVG6"/>
<dbReference type="KEGG" id="xcb:XC_1894"/>
<dbReference type="HOGENOM" id="CLU_079503_1_1_6"/>
<dbReference type="Proteomes" id="UP000000420">
    <property type="component" value="Chromosome"/>
</dbReference>
<dbReference type="GO" id="GO:0005886">
    <property type="term" value="C:plasma membrane"/>
    <property type="evidence" value="ECO:0007669"/>
    <property type="project" value="UniProtKB-SubCell"/>
</dbReference>
<dbReference type="GO" id="GO:0020037">
    <property type="term" value="F:heme binding"/>
    <property type="evidence" value="ECO:0007669"/>
    <property type="project" value="InterPro"/>
</dbReference>
<dbReference type="GO" id="GO:0046872">
    <property type="term" value="F:metal ion binding"/>
    <property type="evidence" value="ECO:0007669"/>
    <property type="project" value="UniProtKB-KW"/>
</dbReference>
<dbReference type="GO" id="GO:0017004">
    <property type="term" value="P:cytochrome complex assembly"/>
    <property type="evidence" value="ECO:0007669"/>
    <property type="project" value="UniProtKB-KW"/>
</dbReference>
<dbReference type="FunFam" id="2.40.50.140:FF:000104">
    <property type="entry name" value="Cytochrome c-type biogenesis protein CcmE"/>
    <property type="match status" value="1"/>
</dbReference>
<dbReference type="Gene3D" id="2.40.50.140">
    <property type="entry name" value="Nucleic acid-binding proteins"/>
    <property type="match status" value="1"/>
</dbReference>
<dbReference type="HAMAP" id="MF_01959">
    <property type="entry name" value="CcmE"/>
    <property type="match status" value="1"/>
</dbReference>
<dbReference type="InterPro" id="IPR004329">
    <property type="entry name" value="CcmE"/>
</dbReference>
<dbReference type="InterPro" id="IPR036127">
    <property type="entry name" value="CcmE-like_sf"/>
</dbReference>
<dbReference type="InterPro" id="IPR012340">
    <property type="entry name" value="NA-bd_OB-fold"/>
</dbReference>
<dbReference type="NCBIfam" id="NF009727">
    <property type="entry name" value="PRK13254.1-1"/>
    <property type="match status" value="1"/>
</dbReference>
<dbReference type="NCBIfam" id="NF009728">
    <property type="entry name" value="PRK13254.1-2"/>
    <property type="match status" value="1"/>
</dbReference>
<dbReference type="NCBIfam" id="NF009729">
    <property type="entry name" value="PRK13254.1-3"/>
    <property type="match status" value="1"/>
</dbReference>
<dbReference type="NCBIfam" id="NF009731">
    <property type="entry name" value="PRK13254.1-5"/>
    <property type="match status" value="1"/>
</dbReference>
<dbReference type="PANTHER" id="PTHR34128">
    <property type="entry name" value="CYTOCHROME C-TYPE BIOGENESIS PROTEIN CCME HOMOLOG, MITOCHONDRIAL"/>
    <property type="match status" value="1"/>
</dbReference>
<dbReference type="PANTHER" id="PTHR34128:SF2">
    <property type="entry name" value="CYTOCHROME C-TYPE BIOGENESIS PROTEIN CCME HOMOLOG, MITOCHONDRIAL"/>
    <property type="match status" value="1"/>
</dbReference>
<dbReference type="Pfam" id="PF03100">
    <property type="entry name" value="CcmE"/>
    <property type="match status" value="1"/>
</dbReference>
<dbReference type="SUPFAM" id="SSF82093">
    <property type="entry name" value="Heme chaperone CcmE"/>
    <property type="match status" value="1"/>
</dbReference>
<feature type="chain" id="PRO_0000238884" description="Cytochrome c-type biogenesis protein CcmE 2">
    <location>
        <begin position="1"/>
        <end position="152"/>
    </location>
</feature>
<feature type="topological domain" description="Cytoplasmic" evidence="1">
    <location>
        <begin position="1"/>
        <end position="8"/>
    </location>
</feature>
<feature type="transmembrane region" description="Helical; Signal-anchor for type II membrane protein" evidence="1">
    <location>
        <begin position="9"/>
        <end position="29"/>
    </location>
</feature>
<feature type="topological domain" description="Periplasmic" evidence="1">
    <location>
        <begin position="30"/>
        <end position="152"/>
    </location>
</feature>
<feature type="binding site" description="covalent" evidence="1">
    <location>
        <position position="123"/>
    </location>
    <ligand>
        <name>heme</name>
        <dbReference type="ChEBI" id="CHEBI:30413"/>
    </ligand>
</feature>
<feature type="binding site" description="axial binding residue" evidence="1">
    <location>
        <position position="127"/>
    </location>
    <ligand>
        <name>heme</name>
        <dbReference type="ChEBI" id="CHEBI:30413"/>
    </ligand>
    <ligandPart>
        <name>Fe</name>
        <dbReference type="ChEBI" id="CHEBI:18248"/>
    </ligandPart>
</feature>
<keyword id="KW-0997">Cell inner membrane</keyword>
<keyword id="KW-1003">Cell membrane</keyword>
<keyword id="KW-0201">Cytochrome c-type biogenesis</keyword>
<keyword id="KW-0349">Heme</keyword>
<keyword id="KW-0408">Iron</keyword>
<keyword id="KW-0472">Membrane</keyword>
<keyword id="KW-0479">Metal-binding</keyword>
<keyword id="KW-0735">Signal-anchor</keyword>
<keyword id="KW-0812">Transmembrane</keyword>
<keyword id="KW-1133">Transmembrane helix</keyword>
<accession>Q4UVG6</accession>
<proteinExistence type="inferred from homology"/>
<gene>
    <name evidence="1" type="primary">ccmE2</name>
    <name evidence="1" type="synonym">cycJ2</name>
    <name type="ordered locus">XC_1894</name>
</gene>
<comment type="function">
    <text evidence="1">Heme chaperone required for the biogenesis of c-type cytochromes. Transiently binds heme delivered by CcmC and transfers the heme to apo-cytochromes in a process facilitated by CcmF and CcmH.</text>
</comment>
<comment type="subcellular location">
    <subcellularLocation>
        <location evidence="1">Cell inner membrane</location>
        <topology evidence="1">Single-pass type II membrane protein</topology>
        <orientation evidence="1">Periplasmic side</orientation>
    </subcellularLocation>
</comment>
<comment type="similarity">
    <text evidence="1">Belongs to the CcmE/CycJ family.</text>
</comment>